<feature type="chain" id="PRO_1000191847" description="RNA pyrophosphohydrolase">
    <location>
        <begin position="1"/>
        <end position="162"/>
    </location>
</feature>
<feature type="domain" description="Nudix hydrolase" evidence="1">
    <location>
        <begin position="11"/>
        <end position="155"/>
    </location>
</feature>
<feature type="short sequence motif" description="Nudix box">
    <location>
        <begin position="45"/>
        <end position="66"/>
    </location>
</feature>
<dbReference type="EC" id="3.6.1.-" evidence="1"/>
<dbReference type="EMBL" id="CP001150">
    <property type="protein sequence ID" value="ACM02165.1"/>
    <property type="molecule type" value="Genomic_DNA"/>
</dbReference>
<dbReference type="RefSeq" id="WP_011338602.1">
    <property type="nucleotide sequence ID" value="NC_011963.1"/>
</dbReference>
<dbReference type="SMR" id="B9KN59"/>
<dbReference type="GeneID" id="67447686"/>
<dbReference type="KEGG" id="rsk:RSKD131_2305"/>
<dbReference type="HOGENOM" id="CLU_087195_3_0_5"/>
<dbReference type="GO" id="GO:0034432">
    <property type="term" value="F:bis(5'-adenosyl)-pentaphosphatase activity"/>
    <property type="evidence" value="ECO:0007669"/>
    <property type="project" value="TreeGrafter"/>
</dbReference>
<dbReference type="GO" id="GO:0008893">
    <property type="term" value="F:guanosine-3',5'-bis(diphosphate) 3'-diphosphatase activity"/>
    <property type="evidence" value="ECO:0007669"/>
    <property type="project" value="TreeGrafter"/>
</dbReference>
<dbReference type="GO" id="GO:0006753">
    <property type="term" value="P:nucleoside phosphate metabolic process"/>
    <property type="evidence" value="ECO:0007669"/>
    <property type="project" value="TreeGrafter"/>
</dbReference>
<dbReference type="GO" id="GO:0019693">
    <property type="term" value="P:ribose phosphate metabolic process"/>
    <property type="evidence" value="ECO:0007669"/>
    <property type="project" value="TreeGrafter"/>
</dbReference>
<dbReference type="CDD" id="cd03671">
    <property type="entry name" value="NUDIX_Ap4A_hydrolase_plant_like"/>
    <property type="match status" value="1"/>
</dbReference>
<dbReference type="Gene3D" id="3.90.79.10">
    <property type="entry name" value="Nucleoside Triphosphate Pyrophosphohydrolase"/>
    <property type="match status" value="1"/>
</dbReference>
<dbReference type="HAMAP" id="MF_00298">
    <property type="entry name" value="Nudix_RppH"/>
    <property type="match status" value="1"/>
</dbReference>
<dbReference type="InterPro" id="IPR020476">
    <property type="entry name" value="Nudix_hydrolase"/>
</dbReference>
<dbReference type="InterPro" id="IPR015797">
    <property type="entry name" value="NUDIX_hydrolase-like_dom_sf"/>
</dbReference>
<dbReference type="InterPro" id="IPR020084">
    <property type="entry name" value="NUDIX_hydrolase_CS"/>
</dbReference>
<dbReference type="InterPro" id="IPR000086">
    <property type="entry name" value="NUDIX_hydrolase_dom"/>
</dbReference>
<dbReference type="InterPro" id="IPR022927">
    <property type="entry name" value="RppH"/>
</dbReference>
<dbReference type="NCBIfam" id="NF001938">
    <property type="entry name" value="PRK00714.1-5"/>
    <property type="match status" value="1"/>
</dbReference>
<dbReference type="PANTHER" id="PTHR11839:SF22">
    <property type="entry name" value="NUDIX HYDROLASE 26, CHLOROPLASTIC"/>
    <property type="match status" value="1"/>
</dbReference>
<dbReference type="PANTHER" id="PTHR11839">
    <property type="entry name" value="UDP/ADP-SUGAR PYROPHOSPHATASE"/>
    <property type="match status" value="1"/>
</dbReference>
<dbReference type="Pfam" id="PF00293">
    <property type="entry name" value="NUDIX"/>
    <property type="match status" value="1"/>
</dbReference>
<dbReference type="PRINTS" id="PR00502">
    <property type="entry name" value="NUDIXFAMILY"/>
</dbReference>
<dbReference type="SUPFAM" id="SSF55811">
    <property type="entry name" value="Nudix"/>
    <property type="match status" value="1"/>
</dbReference>
<dbReference type="PROSITE" id="PS51462">
    <property type="entry name" value="NUDIX"/>
    <property type="match status" value="1"/>
</dbReference>
<dbReference type="PROSITE" id="PS00893">
    <property type="entry name" value="NUDIX_BOX"/>
    <property type="match status" value="1"/>
</dbReference>
<protein>
    <recommendedName>
        <fullName evidence="1">RNA pyrophosphohydrolase</fullName>
        <ecNumber evidence="1">3.6.1.-</ecNumber>
    </recommendedName>
    <alternativeName>
        <fullName evidence="1">(Di)nucleoside polyphosphate hydrolase</fullName>
    </alternativeName>
</protein>
<evidence type="ECO:0000255" key="1">
    <source>
        <dbReference type="HAMAP-Rule" id="MF_00298"/>
    </source>
</evidence>
<sequence>MERTIDPLTLPYRPCVGIVLINREGLIFAGQRIDSPVPAWQMPQGGIDEGEKPREAALRELWEETGIPAERVEFVAKAPDWVTYDLPPELLGRVWGGKYRGQRQKWFLYRYLGTDEEVGIGTDHAEFSCWRWIGAEEMVAAIVPFKRAVYEEVVATFRPHLA</sequence>
<reference key="1">
    <citation type="journal article" date="2009" name="J. Bacteriol.">
        <title>Complete genome sequence of Rhodobacter sphaeroides KD131.</title>
        <authorList>
            <person name="Lim S.-K."/>
            <person name="Kim S.J."/>
            <person name="Cha S.H."/>
            <person name="Oh Y.-K."/>
            <person name="Rhee H.-J."/>
            <person name="Kim M.-S."/>
            <person name="Lee J.K."/>
        </authorList>
    </citation>
    <scope>NUCLEOTIDE SEQUENCE [LARGE SCALE GENOMIC DNA]</scope>
    <source>
        <strain>KD131 / KCTC 12085</strain>
    </source>
</reference>
<keyword id="KW-0378">Hydrolase</keyword>
<accession>B9KN59</accession>
<gene>
    <name evidence="1" type="primary">rppH</name>
    <name evidence="1" type="synonym">nudH</name>
    <name type="ordered locus">RSKD131_2305</name>
</gene>
<organism>
    <name type="scientific">Cereibacter sphaeroides (strain KD131 / KCTC 12085)</name>
    <name type="common">Rhodobacter sphaeroides</name>
    <dbReference type="NCBI Taxonomy" id="557760"/>
    <lineage>
        <taxon>Bacteria</taxon>
        <taxon>Pseudomonadati</taxon>
        <taxon>Pseudomonadota</taxon>
        <taxon>Alphaproteobacteria</taxon>
        <taxon>Rhodobacterales</taxon>
        <taxon>Paracoccaceae</taxon>
        <taxon>Cereibacter</taxon>
    </lineage>
</organism>
<comment type="function">
    <text evidence="1">Accelerates the degradation of transcripts by removing pyrophosphate from the 5'-end of triphosphorylated RNA, leading to a more labile monophosphorylated state that can stimulate subsequent ribonuclease cleavage.</text>
</comment>
<comment type="cofactor">
    <cofactor evidence="1">
        <name>a divalent metal cation</name>
        <dbReference type="ChEBI" id="CHEBI:60240"/>
    </cofactor>
</comment>
<comment type="similarity">
    <text evidence="1">Belongs to the Nudix hydrolase family. RppH subfamily.</text>
</comment>
<proteinExistence type="inferred from homology"/>
<name>RPPH_CERSK</name>